<evidence type="ECO:0000250" key="1"/>
<evidence type="ECO:0000255" key="2"/>
<evidence type="ECO:0000255" key="3">
    <source>
        <dbReference type="PROSITE-ProRule" id="PRU01096"/>
    </source>
</evidence>
<evidence type="ECO:0000269" key="4">
    <source>
    </source>
</evidence>
<evidence type="ECO:0000269" key="5">
    <source>
    </source>
</evidence>
<evidence type="ECO:0000269" key="6">
    <source>
    </source>
</evidence>
<evidence type="ECO:0000269" key="7">
    <source ref="6"/>
</evidence>
<evidence type="ECO:0000305" key="8"/>
<protein>
    <recommendedName>
        <fullName>Endo-1,4-beta-xylanase C</fullName>
        <shortName>Xylanase B</shortName>
        <ecNumber>3.2.1.8</ecNumber>
    </recommendedName>
    <alternativeName>
        <fullName>1,4-beta-D-xylan xylanohydrolase C</fullName>
    </alternativeName>
</protein>
<keyword id="KW-0119">Carbohydrate metabolism</keyword>
<keyword id="KW-1015">Disulfide bond</keyword>
<keyword id="KW-0326">Glycosidase</keyword>
<keyword id="KW-0378">Hydrolase</keyword>
<keyword id="KW-0624">Polysaccharide degradation</keyword>
<keyword id="KW-1185">Reference proteome</keyword>
<keyword id="KW-0964">Secreted</keyword>
<keyword id="KW-0732">Signal</keyword>
<keyword id="KW-0843">Virulence</keyword>
<keyword id="KW-0858">Xylan degradation</keyword>
<gene>
    <name type="primary">XYLC</name>
    <name type="ORF">FGRRES_11487</name>
    <name type="ORF">FGSG_11487</name>
</gene>
<name>XYNC_GIBZE</name>
<feature type="signal peptide" evidence="2">
    <location>
        <begin position="1"/>
        <end position="15"/>
    </location>
</feature>
<feature type="chain" id="PRO_0000429611" description="Endo-1,4-beta-xylanase C">
    <location>
        <begin position="16"/>
        <end position="327"/>
    </location>
</feature>
<feature type="domain" description="GH10" evidence="3">
    <location>
        <begin position="43"/>
        <end position="325"/>
    </location>
</feature>
<feature type="active site" description="Proton donor" evidence="1">
    <location>
        <position position="154"/>
    </location>
</feature>
<feature type="active site" description="Nucleophile" evidence="1">
    <location>
        <position position="262"/>
    </location>
</feature>
<feature type="disulfide bond" evidence="1">
    <location>
        <begin position="280"/>
        <end position="286"/>
    </location>
</feature>
<comment type="function">
    <text evidence="7">Endo-1,4-beta-xylanase involved in the hydrolysis of xylan, a major structural heterogeneous polysaccharide found in plant biomass representing the second most abundant polysaccharide in the biosphere, after cellulose. Plays an important role in causing fusarium head blight (FHB) on cereal crops.</text>
</comment>
<comment type="catalytic activity">
    <reaction evidence="7">
        <text>Endohydrolysis of (1-&gt;4)-beta-D-xylosidic linkages in xylans.</text>
        <dbReference type="EC" id="3.2.1.8"/>
    </reaction>
</comment>
<comment type="activity regulation">
    <text evidence="7">Weakly inhibited by the wheat xylanase inhibiting protein I (XIP-I).</text>
</comment>
<comment type="biophysicochemical properties">
    <kinetics>
        <KM evidence="7">3.6 mg/ml for wheat flour arabinoxylan</KM>
        <KM evidence="7">3.5 mg/ml for soluble oat spelt xylan</KM>
        <KM evidence="7">6.3 mg/ml for soluble birchwood xylan</KM>
    </kinetics>
    <phDependence>
        <text evidence="7">Optimum pH is 5.0-7.0.</text>
    </phDependence>
    <temperatureDependence>
        <text evidence="7">Optimum temperature is 40 degrees Celsius.</text>
    </temperatureDependence>
</comment>
<comment type="pathway">
    <text>Glycan degradation; xylan degradation.</text>
</comment>
<comment type="subcellular location">
    <subcellularLocation>
        <location evidence="1">Secreted</location>
    </subcellularLocation>
</comment>
<comment type="induction">
    <text evidence="4 5 6">Expression is under the control of transcription factor XYR1 and highly induced by xylan, carboxymethylcellulose (CMC), and hop cell wall.</text>
</comment>
<comment type="similarity">
    <text evidence="8">Belongs to the glycosyl hydrolase 10 (cellulase F) family.</text>
</comment>
<reference key="1">
    <citation type="journal article" date="2007" name="Science">
        <title>The Fusarium graminearum genome reveals a link between localized polymorphism and pathogen specialization.</title>
        <authorList>
            <person name="Cuomo C.A."/>
            <person name="Gueldener U."/>
            <person name="Xu J.-R."/>
            <person name="Trail F."/>
            <person name="Turgeon B.G."/>
            <person name="Di Pietro A."/>
            <person name="Walton J.D."/>
            <person name="Ma L.-J."/>
            <person name="Baker S.E."/>
            <person name="Rep M."/>
            <person name="Adam G."/>
            <person name="Antoniw J."/>
            <person name="Baldwin T."/>
            <person name="Calvo S.E."/>
            <person name="Chang Y.-L."/>
            <person name="DeCaprio D."/>
            <person name="Gale L.R."/>
            <person name="Gnerre S."/>
            <person name="Goswami R.S."/>
            <person name="Hammond-Kosack K."/>
            <person name="Harris L.J."/>
            <person name="Hilburn K."/>
            <person name="Kennell J.C."/>
            <person name="Kroken S."/>
            <person name="Magnuson J.K."/>
            <person name="Mannhaupt G."/>
            <person name="Mauceli E.W."/>
            <person name="Mewes H.-W."/>
            <person name="Mitterbauer R."/>
            <person name="Muehlbauer G."/>
            <person name="Muensterkoetter M."/>
            <person name="Nelson D."/>
            <person name="O'Donnell K."/>
            <person name="Ouellet T."/>
            <person name="Qi W."/>
            <person name="Quesneville H."/>
            <person name="Roncero M.I.G."/>
            <person name="Seong K.-Y."/>
            <person name="Tetko I.V."/>
            <person name="Urban M."/>
            <person name="Waalwijk C."/>
            <person name="Ward T.J."/>
            <person name="Yao J."/>
            <person name="Birren B.W."/>
            <person name="Kistler H.C."/>
        </authorList>
    </citation>
    <scope>NUCLEOTIDE SEQUENCE [LARGE SCALE GENOMIC DNA]</scope>
    <source>
        <strain>ATCC MYA-4620 / CBS 123657 / FGSC 9075 / NRRL 31084 / PH-1</strain>
    </source>
</reference>
<reference key="2">
    <citation type="journal article" date="2010" name="Nature">
        <title>Comparative genomics reveals mobile pathogenicity chromosomes in Fusarium.</title>
        <authorList>
            <person name="Ma L.-J."/>
            <person name="van der Does H.C."/>
            <person name="Borkovich K.A."/>
            <person name="Coleman J.J."/>
            <person name="Daboussi M.-J."/>
            <person name="Di Pietro A."/>
            <person name="Dufresne M."/>
            <person name="Freitag M."/>
            <person name="Grabherr M."/>
            <person name="Henrissat B."/>
            <person name="Houterman P.M."/>
            <person name="Kang S."/>
            <person name="Shim W.-B."/>
            <person name="Woloshuk C."/>
            <person name="Xie X."/>
            <person name="Xu J.-R."/>
            <person name="Antoniw J."/>
            <person name="Baker S.E."/>
            <person name="Bluhm B.H."/>
            <person name="Breakspear A."/>
            <person name="Brown D.W."/>
            <person name="Butchko R.A.E."/>
            <person name="Chapman S."/>
            <person name="Coulson R."/>
            <person name="Coutinho P.M."/>
            <person name="Danchin E.G.J."/>
            <person name="Diener A."/>
            <person name="Gale L.R."/>
            <person name="Gardiner D.M."/>
            <person name="Goff S."/>
            <person name="Hammond-Kosack K.E."/>
            <person name="Hilburn K."/>
            <person name="Hua-Van A."/>
            <person name="Jonkers W."/>
            <person name="Kazan K."/>
            <person name="Kodira C.D."/>
            <person name="Koehrsen M."/>
            <person name="Kumar L."/>
            <person name="Lee Y.-H."/>
            <person name="Li L."/>
            <person name="Manners J.M."/>
            <person name="Miranda-Saavedra D."/>
            <person name="Mukherjee M."/>
            <person name="Park G."/>
            <person name="Park J."/>
            <person name="Park S.-Y."/>
            <person name="Proctor R.H."/>
            <person name="Regev A."/>
            <person name="Ruiz-Roldan M.C."/>
            <person name="Sain D."/>
            <person name="Sakthikumar S."/>
            <person name="Sykes S."/>
            <person name="Schwartz D.C."/>
            <person name="Turgeon B.G."/>
            <person name="Wapinski I."/>
            <person name="Yoder O."/>
            <person name="Young S."/>
            <person name="Zeng Q."/>
            <person name="Zhou S."/>
            <person name="Galagan J."/>
            <person name="Cuomo C.A."/>
            <person name="Kistler H.C."/>
            <person name="Rep M."/>
        </authorList>
    </citation>
    <scope>GENOME REANNOTATION</scope>
    <source>
        <strain>ATCC MYA-4620 / CBS 123657 / FGSC 9075 / NRRL 31084 / PH-1</strain>
    </source>
</reference>
<reference key="3">
    <citation type="journal article" date="2015" name="BMC Genomics">
        <title>The completed genome sequence of the pathogenic ascomycete fungus Fusarium graminearum.</title>
        <authorList>
            <person name="King R."/>
            <person name="Urban M."/>
            <person name="Hammond-Kosack M.C.U."/>
            <person name="Hassani-Pak K."/>
            <person name="Hammond-Kosack K.E."/>
        </authorList>
    </citation>
    <scope>NUCLEOTIDE SEQUENCE [LARGE SCALE GENOMIC DNA]</scope>
    <source>
        <strain>ATCC MYA-4620 / CBS 123657 / FGSC 9075 / NRRL 31084 / PH-1</strain>
    </source>
</reference>
<reference key="4">
    <citation type="journal article" date="2006" name="Biochem. Biophys. Res. Commun.">
        <title>Fusarium graminearum on plant cell wall: no fewer than 30 xylanase genes transcribed.</title>
        <authorList>
            <person name="Hatsch D."/>
            <person name="Phalip V."/>
            <person name="Petkovski E."/>
            <person name="Jeltsch J.M."/>
        </authorList>
    </citation>
    <scope>INDUCTION</scope>
</reference>
<reference key="5">
    <citation type="journal article" date="2007" name="Curr. Genet.">
        <title>Xyr1 regulates xylanase but not cellulase formation in the head blight fungus Fusarium graminearum.</title>
        <authorList>
            <person name="Brunner K."/>
            <person name="Lichtenauer A.M."/>
            <person name="Kratochwill K."/>
            <person name="Delic M."/>
            <person name="Mach R.L."/>
        </authorList>
    </citation>
    <scope>INDUCTION</scope>
</reference>
<reference key="6">
    <citation type="journal article" date="2009" name="Enzyme Microb. Technol.">
        <title>Fusarium graminearum xylanases show different functional stabilities, substrate specificities and inhibition sensitivities.</title>
        <authorList>
            <person name="Pollet A."/>
            <person name="Belien T."/>
            <person name="Fierens K."/>
            <person name="Delcour J.A."/>
            <person name="Courtin C.M."/>
        </authorList>
    </citation>
    <scope>FUNCTION</scope>
    <scope>CATALYTIC ACTIVITY</scope>
    <scope>BIOPHYSICOCHEMICAL PROPERTIES</scope>
    <scope>ACTIVITY REGULATION</scope>
</reference>
<reference key="7">
    <citation type="journal article" date="2013" name="Plant Physiol. Biochem.">
        <title>A Fusarium graminearum xylanase expressed during wheat infection is a necrotizing factor but is not essential for virulence.</title>
        <authorList>
            <person name="Sella L."/>
            <person name="Gazzetti K."/>
            <person name="Faoro F."/>
            <person name="Odorizzi S."/>
            <person name="D'Ovidio R."/>
            <person name="Schafer W."/>
            <person name="Favaron F."/>
        </authorList>
    </citation>
    <scope>INDUCTION</scope>
</reference>
<organism>
    <name type="scientific">Gibberella zeae (strain ATCC MYA-4620 / CBS 123657 / FGSC 9075 / NRRL 31084 / PH-1)</name>
    <name type="common">Wheat head blight fungus</name>
    <name type="synonym">Fusarium graminearum</name>
    <dbReference type="NCBI Taxonomy" id="229533"/>
    <lineage>
        <taxon>Eukaryota</taxon>
        <taxon>Fungi</taxon>
        <taxon>Dikarya</taxon>
        <taxon>Ascomycota</taxon>
        <taxon>Pezizomycotina</taxon>
        <taxon>Sordariomycetes</taxon>
        <taxon>Hypocreomycetidae</taxon>
        <taxon>Hypocreales</taxon>
        <taxon>Nectriaceae</taxon>
        <taxon>Fusarium</taxon>
    </lineage>
</organism>
<accession>I1S3T9</accession>
<accession>A0A098E530</accession>
<accession>A0A0E0SR14</accession>
<sequence>MKFSSLLFTASLVAAMPASIEPRQAQESINKLIKAKGKLYYGTITDPNLLQSQQNNAVIKADFGQVTPENSMKWDATEPQQGKFNFGGGDQVVNFAAQNGLKVRGHALVWHSQLPQWVHNIKDKTQMKNAIENHIKNVAGHFKGKVYAWDVLNEIFDWDGSLRKDSPFTQVLGEEFVGIAFRAARAADPNAKLYINDYSIDDPNAAKLKAGMVAHVKKWVSQGIPIDGIGSQTHLDPGAANGVQAALQQMASTGVKEVAITELDIRSAPAADYATVTKACLNVPKCVGITVWGVSDKDSWRKEKDSLLFNAQYQAKPAYTAVVNALR</sequence>
<proteinExistence type="evidence at protein level"/>
<dbReference type="EC" id="3.2.1.8"/>
<dbReference type="EMBL" id="AY575965">
    <property type="status" value="NOT_ANNOTATED_CDS"/>
    <property type="molecule type" value="Genomic_DNA"/>
</dbReference>
<dbReference type="EMBL" id="DS231671">
    <property type="protein sequence ID" value="ESU18104.1"/>
    <property type="molecule type" value="Genomic_DNA"/>
</dbReference>
<dbReference type="EMBL" id="HG970334">
    <property type="protein sequence ID" value="CEF88877.1"/>
    <property type="molecule type" value="Genomic_DNA"/>
</dbReference>
<dbReference type="RefSeq" id="XP_011325726.1">
    <property type="nucleotide sequence ID" value="XM_011327424.1"/>
</dbReference>
<dbReference type="SMR" id="I1S3T9"/>
<dbReference type="STRING" id="229533.I1S3T9"/>
<dbReference type="GeneID" id="23558319"/>
<dbReference type="KEGG" id="fgr:FGSG_11487"/>
<dbReference type="VEuPathDB" id="FungiDB:FGRAMPH1_01G22187"/>
<dbReference type="eggNOG" id="ENOG502QSCW">
    <property type="taxonomic scope" value="Eukaryota"/>
</dbReference>
<dbReference type="HOGENOM" id="CLU_020161_2_1_1"/>
<dbReference type="InParanoid" id="I1S3T9"/>
<dbReference type="OrthoDB" id="71156at110618"/>
<dbReference type="UniPathway" id="UPA00114"/>
<dbReference type="Proteomes" id="UP000070720">
    <property type="component" value="Chromosome 3"/>
</dbReference>
<dbReference type="GO" id="GO:0005576">
    <property type="term" value="C:extracellular region"/>
    <property type="evidence" value="ECO:0007669"/>
    <property type="project" value="UniProtKB-SubCell"/>
</dbReference>
<dbReference type="GO" id="GO:0031176">
    <property type="term" value="F:endo-1,4-beta-xylanase activity"/>
    <property type="evidence" value="ECO:0007669"/>
    <property type="project" value="UniProtKB-EC"/>
</dbReference>
<dbReference type="GO" id="GO:0045493">
    <property type="term" value="P:xylan catabolic process"/>
    <property type="evidence" value="ECO:0007669"/>
    <property type="project" value="UniProtKB-UniPathway"/>
</dbReference>
<dbReference type="Gene3D" id="3.20.20.80">
    <property type="entry name" value="Glycosidases"/>
    <property type="match status" value="1"/>
</dbReference>
<dbReference type="InterPro" id="IPR044846">
    <property type="entry name" value="GH10"/>
</dbReference>
<dbReference type="InterPro" id="IPR001000">
    <property type="entry name" value="GH10_dom"/>
</dbReference>
<dbReference type="InterPro" id="IPR017853">
    <property type="entry name" value="Glycoside_hydrolase_SF"/>
</dbReference>
<dbReference type="PANTHER" id="PTHR31490:SF76">
    <property type="entry name" value="ENDO-1,4-BETA-XYLANASE C"/>
    <property type="match status" value="1"/>
</dbReference>
<dbReference type="PANTHER" id="PTHR31490">
    <property type="entry name" value="GLYCOSYL HYDROLASE"/>
    <property type="match status" value="1"/>
</dbReference>
<dbReference type="Pfam" id="PF00331">
    <property type="entry name" value="Glyco_hydro_10"/>
    <property type="match status" value="1"/>
</dbReference>
<dbReference type="PRINTS" id="PR00134">
    <property type="entry name" value="GLHYDRLASE10"/>
</dbReference>
<dbReference type="SMART" id="SM00633">
    <property type="entry name" value="Glyco_10"/>
    <property type="match status" value="1"/>
</dbReference>
<dbReference type="SUPFAM" id="SSF51445">
    <property type="entry name" value="(Trans)glycosidases"/>
    <property type="match status" value="1"/>
</dbReference>
<dbReference type="PROSITE" id="PS51760">
    <property type="entry name" value="GH10_2"/>
    <property type="match status" value="1"/>
</dbReference>